<feature type="chain" id="PRO_0000331544" description="Organic solute transporter subunit alpha">
    <location>
        <begin position="1"/>
        <end position="340"/>
    </location>
</feature>
<feature type="topological domain" description="Extracellular" evidence="3">
    <location>
        <begin position="1"/>
        <end position="48"/>
    </location>
</feature>
<feature type="transmembrane region" description="Helical" evidence="3">
    <location>
        <begin position="49"/>
        <end position="69"/>
    </location>
</feature>
<feature type="topological domain" description="Cytoplasmic" evidence="3">
    <location>
        <begin position="70"/>
        <end position="87"/>
    </location>
</feature>
<feature type="transmembrane region" description="Helical" evidence="3">
    <location>
        <begin position="88"/>
        <end position="108"/>
    </location>
</feature>
<feature type="topological domain" description="Extracellular" evidence="3">
    <location>
        <begin position="109"/>
        <end position="114"/>
    </location>
</feature>
<feature type="transmembrane region" description="Helical" evidence="3">
    <location>
        <begin position="115"/>
        <end position="135"/>
    </location>
</feature>
<feature type="topological domain" description="Cytoplasmic" evidence="3">
    <location>
        <begin position="136"/>
        <end position="181"/>
    </location>
</feature>
<feature type="transmembrane region" description="Helical" evidence="3">
    <location>
        <begin position="182"/>
        <end position="202"/>
    </location>
</feature>
<feature type="topological domain" description="Extracellular" evidence="3">
    <location>
        <begin position="203"/>
        <end position="219"/>
    </location>
</feature>
<feature type="transmembrane region" description="Helical" evidence="3">
    <location>
        <begin position="220"/>
        <end position="240"/>
    </location>
</feature>
<feature type="topological domain" description="Cytoplasmic" evidence="3">
    <location>
        <begin position="241"/>
        <end position="255"/>
    </location>
</feature>
<feature type="transmembrane region" description="Helical" evidence="3">
    <location>
        <begin position="256"/>
        <end position="276"/>
    </location>
</feature>
<feature type="topological domain" description="Extracellular" evidence="3">
    <location>
        <begin position="277"/>
        <end position="297"/>
    </location>
</feature>
<feature type="transmembrane region" description="Helical" evidence="3">
    <location>
        <begin position="298"/>
        <end position="317"/>
    </location>
</feature>
<feature type="topological domain" description="Cytoplasmic" evidence="3">
    <location>
        <begin position="318"/>
        <end position="340"/>
    </location>
</feature>
<feature type="modified residue" description="Phosphoserine" evidence="16">
    <location>
        <position position="330"/>
    </location>
</feature>
<feature type="glycosylation site" description="N-linked (GlcNAc...) asparagine" evidence="3">
    <location>
        <position position="25"/>
    </location>
</feature>
<accession>Q8R000</accession>
<sequence length="340" mass="37759">MEPGRTHIKLDPRYTAELLELLETNYSISPACFSHPPTAAQLLRALGPVDIALTIILTFLTTGSVAIFLEDAVYLYKNTLCPIKKRTLIWSSSAPTVVSVFCCFGLWIPRALTLVEMAITSFYAVCFYLLMMVMVEGFGGKKAVLRTLKDTPMRVHTGPCCCCCPCCPPLILTRKKLQLLLLGPFQYAFFKITLSIVGLFLIPDGIYDPGEISEKSAALWINNLLAVSTLLALWSLAILFRQAKMHLGEQNMGSKFALFQVLVILTALQPAIFSILANSGQIACSPPYSSKIRSQVMNCHMLILETFLMTVLTRMYYRRKDDKVGYEACSLPDLDSALKA</sequence>
<reference key="1">
    <citation type="journal article" date="2005" name="Science">
        <title>The transcriptional landscape of the mammalian genome.</title>
        <authorList>
            <person name="Carninci P."/>
            <person name="Kasukawa T."/>
            <person name="Katayama S."/>
            <person name="Gough J."/>
            <person name="Frith M.C."/>
            <person name="Maeda N."/>
            <person name="Oyama R."/>
            <person name="Ravasi T."/>
            <person name="Lenhard B."/>
            <person name="Wells C."/>
            <person name="Kodzius R."/>
            <person name="Shimokawa K."/>
            <person name="Bajic V.B."/>
            <person name="Brenner S.E."/>
            <person name="Batalov S."/>
            <person name="Forrest A.R."/>
            <person name="Zavolan M."/>
            <person name="Davis M.J."/>
            <person name="Wilming L.G."/>
            <person name="Aidinis V."/>
            <person name="Allen J.E."/>
            <person name="Ambesi-Impiombato A."/>
            <person name="Apweiler R."/>
            <person name="Aturaliya R.N."/>
            <person name="Bailey T.L."/>
            <person name="Bansal M."/>
            <person name="Baxter L."/>
            <person name="Beisel K.W."/>
            <person name="Bersano T."/>
            <person name="Bono H."/>
            <person name="Chalk A.M."/>
            <person name="Chiu K.P."/>
            <person name="Choudhary V."/>
            <person name="Christoffels A."/>
            <person name="Clutterbuck D.R."/>
            <person name="Crowe M.L."/>
            <person name="Dalla E."/>
            <person name="Dalrymple B.P."/>
            <person name="de Bono B."/>
            <person name="Della Gatta G."/>
            <person name="di Bernardo D."/>
            <person name="Down T."/>
            <person name="Engstrom P."/>
            <person name="Fagiolini M."/>
            <person name="Faulkner G."/>
            <person name="Fletcher C.F."/>
            <person name="Fukushima T."/>
            <person name="Furuno M."/>
            <person name="Futaki S."/>
            <person name="Gariboldi M."/>
            <person name="Georgii-Hemming P."/>
            <person name="Gingeras T.R."/>
            <person name="Gojobori T."/>
            <person name="Green R.E."/>
            <person name="Gustincich S."/>
            <person name="Harbers M."/>
            <person name="Hayashi Y."/>
            <person name="Hensch T.K."/>
            <person name="Hirokawa N."/>
            <person name="Hill D."/>
            <person name="Huminiecki L."/>
            <person name="Iacono M."/>
            <person name="Ikeo K."/>
            <person name="Iwama A."/>
            <person name="Ishikawa T."/>
            <person name="Jakt M."/>
            <person name="Kanapin A."/>
            <person name="Katoh M."/>
            <person name="Kawasawa Y."/>
            <person name="Kelso J."/>
            <person name="Kitamura H."/>
            <person name="Kitano H."/>
            <person name="Kollias G."/>
            <person name="Krishnan S.P."/>
            <person name="Kruger A."/>
            <person name="Kummerfeld S.K."/>
            <person name="Kurochkin I.V."/>
            <person name="Lareau L.F."/>
            <person name="Lazarevic D."/>
            <person name="Lipovich L."/>
            <person name="Liu J."/>
            <person name="Liuni S."/>
            <person name="McWilliam S."/>
            <person name="Madan Babu M."/>
            <person name="Madera M."/>
            <person name="Marchionni L."/>
            <person name="Matsuda H."/>
            <person name="Matsuzawa S."/>
            <person name="Miki H."/>
            <person name="Mignone F."/>
            <person name="Miyake S."/>
            <person name="Morris K."/>
            <person name="Mottagui-Tabar S."/>
            <person name="Mulder N."/>
            <person name="Nakano N."/>
            <person name="Nakauchi H."/>
            <person name="Ng P."/>
            <person name="Nilsson R."/>
            <person name="Nishiguchi S."/>
            <person name="Nishikawa S."/>
            <person name="Nori F."/>
            <person name="Ohara O."/>
            <person name="Okazaki Y."/>
            <person name="Orlando V."/>
            <person name="Pang K.C."/>
            <person name="Pavan W.J."/>
            <person name="Pavesi G."/>
            <person name="Pesole G."/>
            <person name="Petrovsky N."/>
            <person name="Piazza S."/>
            <person name="Reed J."/>
            <person name="Reid J.F."/>
            <person name="Ring B.Z."/>
            <person name="Ringwald M."/>
            <person name="Rost B."/>
            <person name="Ruan Y."/>
            <person name="Salzberg S.L."/>
            <person name="Sandelin A."/>
            <person name="Schneider C."/>
            <person name="Schoenbach C."/>
            <person name="Sekiguchi K."/>
            <person name="Semple C.A."/>
            <person name="Seno S."/>
            <person name="Sessa L."/>
            <person name="Sheng Y."/>
            <person name="Shibata Y."/>
            <person name="Shimada H."/>
            <person name="Shimada K."/>
            <person name="Silva D."/>
            <person name="Sinclair B."/>
            <person name="Sperling S."/>
            <person name="Stupka E."/>
            <person name="Sugiura K."/>
            <person name="Sultana R."/>
            <person name="Takenaka Y."/>
            <person name="Taki K."/>
            <person name="Tammoja K."/>
            <person name="Tan S.L."/>
            <person name="Tang S."/>
            <person name="Taylor M.S."/>
            <person name="Tegner J."/>
            <person name="Teichmann S.A."/>
            <person name="Ueda H.R."/>
            <person name="van Nimwegen E."/>
            <person name="Verardo R."/>
            <person name="Wei C.L."/>
            <person name="Yagi K."/>
            <person name="Yamanishi H."/>
            <person name="Zabarovsky E."/>
            <person name="Zhu S."/>
            <person name="Zimmer A."/>
            <person name="Hide W."/>
            <person name="Bult C."/>
            <person name="Grimmond S.M."/>
            <person name="Teasdale R.D."/>
            <person name="Liu E.T."/>
            <person name="Brusic V."/>
            <person name="Quackenbush J."/>
            <person name="Wahlestedt C."/>
            <person name="Mattick J.S."/>
            <person name="Hume D.A."/>
            <person name="Kai C."/>
            <person name="Sasaki D."/>
            <person name="Tomaru Y."/>
            <person name="Fukuda S."/>
            <person name="Kanamori-Katayama M."/>
            <person name="Suzuki M."/>
            <person name="Aoki J."/>
            <person name="Arakawa T."/>
            <person name="Iida J."/>
            <person name="Imamura K."/>
            <person name="Itoh M."/>
            <person name="Kato T."/>
            <person name="Kawaji H."/>
            <person name="Kawagashira N."/>
            <person name="Kawashima T."/>
            <person name="Kojima M."/>
            <person name="Kondo S."/>
            <person name="Konno H."/>
            <person name="Nakano K."/>
            <person name="Ninomiya N."/>
            <person name="Nishio T."/>
            <person name="Okada M."/>
            <person name="Plessy C."/>
            <person name="Shibata K."/>
            <person name="Shiraki T."/>
            <person name="Suzuki S."/>
            <person name="Tagami M."/>
            <person name="Waki K."/>
            <person name="Watahiki A."/>
            <person name="Okamura-Oho Y."/>
            <person name="Suzuki H."/>
            <person name="Kawai J."/>
            <person name="Hayashizaki Y."/>
        </authorList>
    </citation>
    <scope>NUCLEOTIDE SEQUENCE [LARGE SCALE MRNA]</scope>
    <source>
        <strain>C57BL/6J</strain>
        <tissue>Kidney</tissue>
    </source>
</reference>
<reference key="2">
    <citation type="journal article" date="2004" name="Genome Res.">
        <title>The status, quality, and expansion of the NIH full-length cDNA project: the Mammalian Gene Collection (MGC).</title>
        <authorList>
            <consortium name="The MGC Project Team"/>
        </authorList>
    </citation>
    <scope>NUCLEOTIDE SEQUENCE [LARGE SCALE MRNA]</scope>
    <source>
        <strain>FVB/N</strain>
        <tissue>Colon</tissue>
        <tissue>Kidney</tissue>
    </source>
</reference>
<reference key="3">
    <citation type="journal article" date="2005" name="J. Biol. Chem.">
        <title>The heteromeric organic solute transporter alpha-beta, Ostalpha-Ostbeta, is an ileal basolateral bile acid transporter.</title>
        <authorList>
            <person name="Dawson P.A."/>
            <person name="Hubbert M."/>
            <person name="Haywood J."/>
            <person name="Craddock A.L."/>
            <person name="Zerangue N."/>
            <person name="Christian W.V."/>
            <person name="Ballatori N."/>
        </authorList>
    </citation>
    <scope>FUNCTION</scope>
    <scope>SUBCELLULAR LOCATION</scope>
    <scope>GLYCOSYLATION</scope>
    <scope>TISSUE SPECIFICITY</scope>
</reference>
<reference key="4">
    <citation type="journal article" date="2005" name="Hepatology">
        <title>OSTalpha-OSTbeta: a major basolateral bile acid and steroid transporter in human intestinal, renal, and biliary epithelia.</title>
        <authorList>
            <person name="Ballatori N."/>
            <person name="Christian W.V."/>
            <person name="Lee J.Y."/>
            <person name="Dawson P.A."/>
            <person name="Soroka C.J."/>
            <person name="Boyer J.L."/>
            <person name="Madejczyk M.S."/>
            <person name="Li N."/>
        </authorList>
    </citation>
    <scope>FUNCTION</scope>
    <scope>TISSUE SPECIFICITY</scope>
    <scope>TRANSPORT ACTIVITY</scope>
</reference>
<reference key="5">
    <citation type="journal article" date="2006" name="Am. J. Physiol.">
        <title>Regulation of the mouse organic solute transporter alpha-beta, Ostalpha-Ostbeta, by bile acids.</title>
        <authorList>
            <person name="Frankenberg T."/>
            <person name="Rao A."/>
            <person name="Chen F."/>
            <person name="Haywood J."/>
            <person name="Shneider B.L."/>
            <person name="Dawson P.A."/>
        </authorList>
    </citation>
    <scope>INDUCTION BY NR1H4</scope>
</reference>
<reference key="6">
    <citation type="journal article" date="2006" name="Hepatology">
        <title>Mrp4-/- mice have an impaired cytoprotective response in obstructive cholestasis.</title>
        <authorList>
            <person name="Mennone A."/>
            <person name="Soroka C.J."/>
            <person name="Cai S.Y."/>
            <person name="Harry K."/>
            <person name="Adachi M."/>
            <person name="Hagey L."/>
            <person name="Schuetz J.D."/>
            <person name="Boyer J.L."/>
        </authorList>
    </citation>
    <scope>INDUCTION</scope>
</reference>
<reference key="7">
    <citation type="journal article" date="2007" name="Biochem. J.">
        <title>Heterodimerization, trafficking and membrane topology of the two proteins, Ost alpha and Ost beta, that constitute the organic solute and steroid transporter.</title>
        <authorList>
            <person name="Li N."/>
            <person name="Cui Z."/>
            <person name="Fang F."/>
            <person name="Lee J.Y."/>
            <person name="Ballatori N."/>
        </authorList>
    </citation>
    <scope>IDENTIFICATION OF THE OST-ALPHA/OST-BETA COMPLEX</scope>
    <scope>FUNCTION</scope>
    <scope>SUBCELLULAR LOCATION</scope>
    <scope>TOPOLOGY</scope>
    <scope>INTERACTION WITH SLC51B</scope>
    <scope>TRANSPORT ACTIVITY</scope>
</reference>
<reference key="8">
    <citation type="journal article" date="2008" name="Proc. Natl. Acad. Sci. U.S.A.">
        <title>The organic solute transporter alpha-beta, Ostalpha-Ostbeta, is essential for intestinal bile acid transport and homeostasis.</title>
        <authorList>
            <person name="Rao A."/>
            <person name="Haywood J."/>
            <person name="Craddock A.L."/>
            <person name="Belinsky M.G."/>
            <person name="Kruh G.D."/>
            <person name="Dawson P.A."/>
        </authorList>
    </citation>
    <scope>FUNCTION</scope>
    <scope>DISRUPTION PHENOTYPE</scope>
    <scope>TRANSPORT ACTIVITY</scope>
</reference>
<reference key="9">
    <citation type="journal article" date="2010" name="Cell">
        <title>A tissue-specific atlas of mouse protein phosphorylation and expression.</title>
        <authorList>
            <person name="Huttlin E.L."/>
            <person name="Jedrychowski M.P."/>
            <person name="Elias J.E."/>
            <person name="Goswami T."/>
            <person name="Rad R."/>
            <person name="Beausoleil S.A."/>
            <person name="Villen J."/>
            <person name="Haas W."/>
            <person name="Sowa M.E."/>
            <person name="Gygi S.P."/>
        </authorList>
    </citation>
    <scope>PHOSPHORYLATION [LARGE SCALE ANALYSIS] AT SER-330</scope>
    <scope>IDENTIFICATION BY MASS SPECTROMETRY [LARGE SCALE ANALYSIS]</scope>
    <source>
        <tissue>Kidney</tissue>
    </source>
</reference>
<reference key="10">
    <citation type="journal article" date="2012" name="J. Biol. Chem.">
        <title>beta-Subunit of the Ostalpha-Ostbeta organic solute transporter is required not only for heterodimerization and trafficking but also for function.</title>
        <authorList>
            <person name="Christian W.V."/>
            <person name="Li N."/>
            <person name="Hinkle P.M."/>
            <person name="Ballatori N."/>
        </authorList>
    </citation>
    <scope>FUNCTION OF THE OST-ALPHA/OST-BETA COMPLEX IN BILE TRANSPORT</scope>
    <scope>SUBCELLULAR LOCATION</scope>
    <scope>TRANSPORT ACTIVITY</scope>
</reference>
<gene>
    <name type="primary">Slc51a</name>
    <name type="synonym">Osta</name>
</gene>
<comment type="function">
    <text evidence="1 2 4 5 8 9 10">Essential component of the Ost-alpha/Ost-beta complex, a heterodimer that acts as the intestinal basolateral transporter responsible for bile acid export from enterocytes into portal blood (PubMed:15563450, PubMed:16317684, PubMed:17650074, PubMed:18292224, PubMed:22535958). Efficiently transports the major species of bile acids (taurocholate) (PubMed:16317684, PubMed:17650074, PubMed:18292224, PubMed:22535958). Taurine conjugates are transported more efficiently across the basolateral membrane than glycine-conjugated bile acids (PubMed:16317684). Can also transport steroids such as estrone 3-sulfate and dehydroepiandrosterone 3-sulfate, therefore playing a role in the enterohepatic circulation of sterols (By similarity). Able to transport eicosanoids such as prostaglandin E2 (By similarity).</text>
</comment>
<comment type="catalytic activity">
    <reaction evidence="5 8 10 15">
        <text>taurocholate(out) = taurocholate(in)</text>
        <dbReference type="Rhea" id="RHEA:71703"/>
        <dbReference type="ChEBI" id="CHEBI:36257"/>
    </reaction>
</comment>
<comment type="catalytic activity">
    <reaction evidence="5">
        <text>tauroursodeoxycholate(out) = tauroursodeoxycholate(in)</text>
        <dbReference type="Rhea" id="RHEA:71843"/>
        <dbReference type="ChEBI" id="CHEBI:132028"/>
    </reaction>
</comment>
<comment type="catalytic activity">
    <reaction evidence="5">
        <text>glycoursodeoxycholate(out) = glycoursodeoxycholate(in)</text>
        <dbReference type="Rhea" id="RHEA:71847"/>
        <dbReference type="ChEBI" id="CHEBI:132030"/>
    </reaction>
</comment>
<comment type="catalytic activity">
    <reaction evidence="5">
        <text>glycocholate(out) = glycocholate(in)</text>
        <dbReference type="Rhea" id="RHEA:71851"/>
        <dbReference type="ChEBI" id="CHEBI:29746"/>
    </reaction>
</comment>
<comment type="catalytic activity">
    <reaction evidence="5">
        <text>taurochenodeoxycholate(out) = taurochenodeoxycholate(in)</text>
        <dbReference type="Rhea" id="RHEA:71855"/>
        <dbReference type="ChEBI" id="CHEBI:9407"/>
    </reaction>
</comment>
<comment type="catalytic activity">
    <reaction evidence="5">
        <text>glycochenodeoxycholate(out) = glycochenodeoxycholate(in)</text>
        <dbReference type="Rhea" id="RHEA:71859"/>
        <dbReference type="ChEBI" id="CHEBI:36252"/>
    </reaction>
</comment>
<comment type="catalytic activity">
    <reaction evidence="5">
        <text>taurodeoxycholate(out) = taurodeoxycholate(in)</text>
        <dbReference type="Rhea" id="RHEA:71863"/>
        <dbReference type="ChEBI" id="CHEBI:36261"/>
    </reaction>
</comment>
<comment type="catalytic activity">
    <reaction evidence="5">
        <text>glycodeoxycholate(out) = glycodeoxycholate(in)</text>
        <dbReference type="Rhea" id="RHEA:71867"/>
        <dbReference type="ChEBI" id="CHEBI:82982"/>
    </reaction>
</comment>
<comment type="catalytic activity">
    <reaction evidence="2">
        <text>prostaglandin E2(out) = prostaglandin E2(in)</text>
        <dbReference type="Rhea" id="RHEA:50984"/>
        <dbReference type="ChEBI" id="CHEBI:606564"/>
    </reaction>
</comment>
<comment type="catalytic activity">
    <reaction evidence="1">
        <text>estrone 3-sulfate(out) = estrone 3-sulfate(in)</text>
        <dbReference type="Rhea" id="RHEA:71835"/>
        <dbReference type="ChEBI" id="CHEBI:60050"/>
    </reaction>
</comment>
<comment type="catalytic activity">
    <reaction evidence="1">
        <text>dehydroepiandrosterone 3-sulfate(out) = dehydroepiandrosterone 3-sulfate(in)</text>
        <dbReference type="Rhea" id="RHEA:71839"/>
        <dbReference type="ChEBI" id="CHEBI:57905"/>
    </reaction>
</comment>
<comment type="subunit">
    <text evidence="8">Interacts with SLC51B. The Ost-alpha/Ost-beta complex is a heterodimer composed of alpha (SLC51A) and beta (SLC51B) subunit.</text>
</comment>
<comment type="subcellular location">
    <subcellularLocation>
        <location>Cell membrane</location>
        <topology>Multi-pass membrane protein</topology>
    </subcellularLocation>
    <subcellularLocation>
        <location>Endoplasmic reticulum membrane</location>
        <topology>Multi-pass membrane protein</topology>
    </subcellularLocation>
    <text evidence="8">Mainly restricted to the lateral and basal membranes of ileal enterocytes. Transported from the endoplasmic reticulum to the plasma membrane upon interacting with SLC51B.</text>
</comment>
<comment type="tissue specificity">
    <text evidence="4 5">Present at high levels in ileum. In ileum, it is restricted to the apical domain on the mature villus enterocytes with little detectable expression in the goblet cells or crypt enterocytes (at protein level). Expressed in kidney but not in heart, brain, liver, spleen, embryo, lung, thymus, ovary nor testis.</text>
</comment>
<comment type="induction">
    <text evidence="6 7">Positively regulated via the bile acid-activated nuclear receptor farnesoid X receptor (NR1H4/FXR). Up-regulated in mice lacking Mrp4, but it is unable to compensate for the absence of Mrp4.</text>
</comment>
<comment type="PTM">
    <text evidence="14">N-glycosylated.</text>
</comment>
<comment type="disruption phenotype">
    <text evidence="9">Mice are physically indistinguishable from wild-type mice but display strongly reduced transileal transport of taurocholate. Moreover, the bile acid pool size is significantly reduced, but fecal bile acid excretion is not elevated.</text>
</comment>
<comment type="similarity">
    <text evidence="13">Belongs to the OST-alpha family.</text>
</comment>
<protein>
    <recommendedName>
        <fullName evidence="12">Organic solute transporter subunit alpha</fullName>
        <shortName evidence="11">OST-alpha</shortName>
    </recommendedName>
    <alternativeName>
        <fullName>Solute carrier family 51 subunit alpha</fullName>
    </alternativeName>
</protein>
<proteinExistence type="evidence at protein level"/>
<dbReference type="EMBL" id="AK052725">
    <property type="protein sequence ID" value="BAC35116.1"/>
    <property type="molecule type" value="mRNA"/>
</dbReference>
<dbReference type="EMBL" id="AK147155">
    <property type="protein sequence ID" value="BAE27722.1"/>
    <property type="molecule type" value="mRNA"/>
</dbReference>
<dbReference type="EMBL" id="BC024441">
    <property type="protein sequence ID" value="AAH24441.1"/>
    <property type="molecule type" value="mRNA"/>
</dbReference>
<dbReference type="EMBL" id="BC025912">
    <property type="protein sequence ID" value="AAH25912.1"/>
    <property type="molecule type" value="mRNA"/>
</dbReference>
<dbReference type="EMBL" id="BC031178">
    <property type="protein sequence ID" value="AAH31178.1"/>
    <property type="molecule type" value="mRNA"/>
</dbReference>
<dbReference type="CCDS" id="CCDS28121.1"/>
<dbReference type="RefSeq" id="NP_666044.1">
    <property type="nucleotide sequence ID" value="NM_145932.3"/>
</dbReference>
<dbReference type="FunCoup" id="Q8R000">
    <property type="interactions" value="37"/>
</dbReference>
<dbReference type="STRING" id="10090.ENSMUSP00000046286"/>
<dbReference type="ChEMBL" id="CHEMBL2073723"/>
<dbReference type="GlyCosmos" id="Q8R000">
    <property type="glycosylation" value="1 site, No reported glycans"/>
</dbReference>
<dbReference type="GlyGen" id="Q8R000">
    <property type="glycosylation" value="1 site"/>
</dbReference>
<dbReference type="iPTMnet" id="Q8R000"/>
<dbReference type="PhosphoSitePlus" id="Q8R000"/>
<dbReference type="PaxDb" id="10090-ENSMUSP00000046286"/>
<dbReference type="ProteomicsDB" id="294080"/>
<dbReference type="Antibodypedia" id="46863">
    <property type="antibodies" value="100 antibodies from 17 providers"/>
</dbReference>
<dbReference type="DNASU" id="106407"/>
<dbReference type="Ensembl" id="ENSMUST00000042042.9">
    <property type="protein sequence ID" value="ENSMUSP00000046286.8"/>
    <property type="gene ID" value="ENSMUSG00000035699.9"/>
</dbReference>
<dbReference type="GeneID" id="106407"/>
<dbReference type="KEGG" id="mmu:106407"/>
<dbReference type="UCSC" id="uc007yyx.1">
    <property type="organism name" value="mouse"/>
</dbReference>
<dbReference type="AGR" id="MGI:2146634"/>
<dbReference type="CTD" id="200931"/>
<dbReference type="MGI" id="MGI:2146634">
    <property type="gene designation" value="Slc51a"/>
</dbReference>
<dbReference type="VEuPathDB" id="HostDB:ENSMUSG00000035699"/>
<dbReference type="eggNOG" id="ENOG502R3BX">
    <property type="taxonomic scope" value="Eukaryota"/>
</dbReference>
<dbReference type="GeneTree" id="ENSGT00940000160780"/>
<dbReference type="HOGENOM" id="CLU_054316_0_0_1"/>
<dbReference type="InParanoid" id="Q8R000"/>
<dbReference type="OMA" id="IWISGAS"/>
<dbReference type="OrthoDB" id="5832279at2759"/>
<dbReference type="PhylomeDB" id="Q8R000"/>
<dbReference type="TreeFam" id="TF316050"/>
<dbReference type="Reactome" id="R-MMU-159418">
    <property type="pathway name" value="Recycling of bile acids and salts"/>
</dbReference>
<dbReference type="BioGRID-ORCS" id="106407">
    <property type="hits" value="1 hit in 77 CRISPR screens"/>
</dbReference>
<dbReference type="PRO" id="PR:Q8R000"/>
<dbReference type="Proteomes" id="UP000000589">
    <property type="component" value="Chromosome 16"/>
</dbReference>
<dbReference type="RNAct" id="Q8R000">
    <property type="molecule type" value="protein"/>
</dbReference>
<dbReference type="Bgee" id="ENSMUSG00000035699">
    <property type="expression patterns" value="Expressed in ileum and 44 other cell types or tissues"/>
</dbReference>
<dbReference type="ExpressionAtlas" id="Q8R000">
    <property type="expression patterns" value="baseline and differential"/>
</dbReference>
<dbReference type="GO" id="GO:0016323">
    <property type="term" value="C:basolateral plasma membrane"/>
    <property type="evidence" value="ECO:0000314"/>
    <property type="project" value="UniProtKB"/>
</dbReference>
<dbReference type="GO" id="GO:0005789">
    <property type="term" value="C:endoplasmic reticulum membrane"/>
    <property type="evidence" value="ECO:0000314"/>
    <property type="project" value="UniProtKB"/>
</dbReference>
<dbReference type="GO" id="GO:0016020">
    <property type="term" value="C:membrane"/>
    <property type="evidence" value="ECO:0000314"/>
    <property type="project" value="UniProtKB"/>
</dbReference>
<dbReference type="GO" id="GO:0005886">
    <property type="term" value="C:plasma membrane"/>
    <property type="evidence" value="ECO:0000314"/>
    <property type="project" value="UniProtKB"/>
</dbReference>
<dbReference type="GO" id="GO:0032991">
    <property type="term" value="C:protein-containing complex"/>
    <property type="evidence" value="ECO:0000314"/>
    <property type="project" value="UniProtKB"/>
</dbReference>
<dbReference type="GO" id="GO:0015125">
    <property type="term" value="F:bile acid transmembrane transporter activity"/>
    <property type="evidence" value="ECO:0000353"/>
    <property type="project" value="UniProtKB"/>
</dbReference>
<dbReference type="GO" id="GO:0046982">
    <property type="term" value="F:protein heterodimerization activity"/>
    <property type="evidence" value="ECO:0000314"/>
    <property type="project" value="UniProtKB"/>
</dbReference>
<dbReference type="GO" id="GO:0042803">
    <property type="term" value="F:protein homodimerization activity"/>
    <property type="evidence" value="ECO:0000314"/>
    <property type="project" value="UniProtKB"/>
</dbReference>
<dbReference type="GO" id="GO:0022857">
    <property type="term" value="F:transmembrane transporter activity"/>
    <property type="evidence" value="ECO:0000353"/>
    <property type="project" value="MGI"/>
</dbReference>
<dbReference type="GO" id="GO:0015721">
    <property type="term" value="P:bile acid and bile salt transport"/>
    <property type="evidence" value="ECO:0000314"/>
    <property type="project" value="UniProtKB"/>
</dbReference>
<dbReference type="GO" id="GO:0032782">
    <property type="term" value="P:bile acid secretion"/>
    <property type="evidence" value="ECO:0007669"/>
    <property type="project" value="Ensembl"/>
</dbReference>
<dbReference type="InterPro" id="IPR005178">
    <property type="entry name" value="Ostalpha/TMEM184C"/>
</dbReference>
<dbReference type="PANTHER" id="PTHR23423">
    <property type="entry name" value="ORGANIC SOLUTE TRANSPORTER-RELATED"/>
    <property type="match status" value="1"/>
</dbReference>
<dbReference type="Pfam" id="PF03619">
    <property type="entry name" value="Solute_trans_a"/>
    <property type="match status" value="1"/>
</dbReference>
<dbReference type="SMART" id="SM01417">
    <property type="entry name" value="Solute_trans_a"/>
    <property type="match status" value="1"/>
</dbReference>
<keyword id="KW-1003">Cell membrane</keyword>
<keyword id="KW-0256">Endoplasmic reticulum</keyword>
<keyword id="KW-0325">Glycoprotein</keyword>
<keyword id="KW-0445">Lipid transport</keyword>
<keyword id="KW-0472">Membrane</keyword>
<keyword id="KW-0597">Phosphoprotein</keyword>
<keyword id="KW-1185">Reference proteome</keyword>
<keyword id="KW-0812">Transmembrane</keyword>
<keyword id="KW-1133">Transmembrane helix</keyword>
<keyword id="KW-0813">Transport</keyword>
<organism>
    <name type="scientific">Mus musculus</name>
    <name type="common">Mouse</name>
    <dbReference type="NCBI Taxonomy" id="10090"/>
    <lineage>
        <taxon>Eukaryota</taxon>
        <taxon>Metazoa</taxon>
        <taxon>Chordata</taxon>
        <taxon>Craniata</taxon>
        <taxon>Vertebrata</taxon>
        <taxon>Euteleostomi</taxon>
        <taxon>Mammalia</taxon>
        <taxon>Eutheria</taxon>
        <taxon>Euarchontoglires</taxon>
        <taxon>Glires</taxon>
        <taxon>Rodentia</taxon>
        <taxon>Myomorpha</taxon>
        <taxon>Muroidea</taxon>
        <taxon>Muridae</taxon>
        <taxon>Murinae</taxon>
        <taxon>Mus</taxon>
        <taxon>Mus</taxon>
    </lineage>
</organism>
<evidence type="ECO:0000250" key="1">
    <source>
        <dbReference type="UniProtKB" id="Q86UW1"/>
    </source>
</evidence>
<evidence type="ECO:0000250" key="2">
    <source>
        <dbReference type="UniProtKB" id="Q90YM5"/>
    </source>
</evidence>
<evidence type="ECO:0000255" key="3"/>
<evidence type="ECO:0000269" key="4">
    <source>
    </source>
</evidence>
<evidence type="ECO:0000269" key="5">
    <source>
    </source>
</evidence>
<evidence type="ECO:0000269" key="6">
    <source>
    </source>
</evidence>
<evidence type="ECO:0000269" key="7">
    <source>
    </source>
</evidence>
<evidence type="ECO:0000269" key="8">
    <source>
    </source>
</evidence>
<evidence type="ECO:0000269" key="9">
    <source>
    </source>
</evidence>
<evidence type="ECO:0000269" key="10">
    <source>
    </source>
</evidence>
<evidence type="ECO:0000303" key="11">
    <source>
    </source>
</evidence>
<evidence type="ECO:0000303" key="12">
    <source>
    </source>
</evidence>
<evidence type="ECO:0000305" key="13"/>
<evidence type="ECO:0000305" key="14">
    <source>
    </source>
</evidence>
<evidence type="ECO:0000305" key="15">
    <source>
    </source>
</evidence>
<evidence type="ECO:0007744" key="16">
    <source>
    </source>
</evidence>
<name>OSTA_MOUSE</name>